<protein>
    <recommendedName>
        <fullName evidence="1">NADH-quinone oxidoreductase subunit K</fullName>
        <ecNumber evidence="1">7.1.1.-</ecNumber>
    </recommendedName>
    <alternativeName>
        <fullName evidence="1">NADH dehydrogenase I subunit K</fullName>
    </alternativeName>
    <alternativeName>
        <fullName evidence="1">NDH-1 subunit K</fullName>
    </alternativeName>
</protein>
<reference key="1">
    <citation type="journal article" date="2006" name="Nat. Biotechnol.">
        <title>Complete genome of the mutualistic, N2-fixing grass endophyte Azoarcus sp. strain BH72.</title>
        <authorList>
            <person name="Krause A."/>
            <person name="Ramakumar A."/>
            <person name="Bartels D."/>
            <person name="Battistoni F."/>
            <person name="Bekel T."/>
            <person name="Boch J."/>
            <person name="Boehm M."/>
            <person name="Friedrich F."/>
            <person name="Hurek T."/>
            <person name="Krause L."/>
            <person name="Linke B."/>
            <person name="McHardy A.C."/>
            <person name="Sarkar A."/>
            <person name="Schneiker S."/>
            <person name="Syed A.A."/>
            <person name="Thauer R."/>
            <person name="Vorhoelter F.-J."/>
            <person name="Weidner S."/>
            <person name="Puehler A."/>
            <person name="Reinhold-Hurek B."/>
            <person name="Kaiser O."/>
            <person name="Goesmann A."/>
        </authorList>
    </citation>
    <scope>NUCLEOTIDE SEQUENCE [LARGE SCALE GENOMIC DNA]</scope>
    <source>
        <strain>BH72</strain>
    </source>
</reference>
<comment type="function">
    <text evidence="1">NDH-1 shuttles electrons from NADH, via FMN and iron-sulfur (Fe-S) centers, to quinones in the respiratory chain. The immediate electron acceptor for the enzyme in this species is believed to be ubiquinone. Couples the redox reaction to proton translocation (for every two electrons transferred, four hydrogen ions are translocated across the cytoplasmic membrane), and thus conserves the redox energy in a proton gradient.</text>
</comment>
<comment type="catalytic activity">
    <reaction evidence="1">
        <text>a quinone + NADH + 5 H(+)(in) = a quinol + NAD(+) + 4 H(+)(out)</text>
        <dbReference type="Rhea" id="RHEA:57888"/>
        <dbReference type="ChEBI" id="CHEBI:15378"/>
        <dbReference type="ChEBI" id="CHEBI:24646"/>
        <dbReference type="ChEBI" id="CHEBI:57540"/>
        <dbReference type="ChEBI" id="CHEBI:57945"/>
        <dbReference type="ChEBI" id="CHEBI:132124"/>
    </reaction>
</comment>
<comment type="subunit">
    <text evidence="1">NDH-1 is composed of 14 different subunits. Subunits NuoA, H, J, K, L, M, N constitute the membrane sector of the complex.</text>
</comment>
<comment type="subcellular location">
    <subcellularLocation>
        <location evidence="1">Cell inner membrane</location>
        <topology evidence="1">Multi-pass membrane protein</topology>
    </subcellularLocation>
</comment>
<comment type="similarity">
    <text evidence="1">Belongs to the complex I subunit 4L family.</text>
</comment>
<accession>A1K5B8</accession>
<proteinExistence type="inferred from homology"/>
<gene>
    <name evidence="1" type="primary">nuoK</name>
    <name type="ordered locus">azo1406</name>
</gene>
<organism>
    <name type="scientific">Azoarcus sp. (strain BH72)</name>
    <dbReference type="NCBI Taxonomy" id="418699"/>
    <lineage>
        <taxon>Bacteria</taxon>
        <taxon>Pseudomonadati</taxon>
        <taxon>Pseudomonadota</taxon>
        <taxon>Betaproteobacteria</taxon>
        <taxon>Rhodocyclales</taxon>
        <taxon>Zoogloeaceae</taxon>
        <taxon>Azoarcus</taxon>
    </lineage>
</organism>
<name>NUOK_AZOSB</name>
<feature type="chain" id="PRO_0000389933" description="NADH-quinone oxidoreductase subunit K">
    <location>
        <begin position="1"/>
        <end position="101"/>
    </location>
</feature>
<feature type="transmembrane region" description="Helical" evidence="1">
    <location>
        <begin position="4"/>
        <end position="24"/>
    </location>
</feature>
<feature type="transmembrane region" description="Helical" evidence="1">
    <location>
        <begin position="30"/>
        <end position="50"/>
    </location>
</feature>
<feature type="transmembrane region" description="Helical" evidence="1">
    <location>
        <begin position="61"/>
        <end position="81"/>
    </location>
</feature>
<evidence type="ECO:0000255" key="1">
    <source>
        <dbReference type="HAMAP-Rule" id="MF_01456"/>
    </source>
</evidence>
<dbReference type="EC" id="7.1.1.-" evidence="1"/>
<dbReference type="EMBL" id="AM406670">
    <property type="protein sequence ID" value="CAL94023.1"/>
    <property type="molecule type" value="Genomic_DNA"/>
</dbReference>
<dbReference type="RefSeq" id="WP_011765139.1">
    <property type="nucleotide sequence ID" value="NC_008702.1"/>
</dbReference>
<dbReference type="SMR" id="A1K5B8"/>
<dbReference type="STRING" id="62928.azo1406"/>
<dbReference type="KEGG" id="aoa:dqs_1530"/>
<dbReference type="KEGG" id="azo:azo1406"/>
<dbReference type="eggNOG" id="COG0713">
    <property type="taxonomic scope" value="Bacteria"/>
</dbReference>
<dbReference type="HOGENOM" id="CLU_144724_2_0_4"/>
<dbReference type="OrthoDB" id="9801357at2"/>
<dbReference type="Proteomes" id="UP000002588">
    <property type="component" value="Chromosome"/>
</dbReference>
<dbReference type="GO" id="GO:0030964">
    <property type="term" value="C:NADH dehydrogenase complex"/>
    <property type="evidence" value="ECO:0007669"/>
    <property type="project" value="TreeGrafter"/>
</dbReference>
<dbReference type="GO" id="GO:0005886">
    <property type="term" value="C:plasma membrane"/>
    <property type="evidence" value="ECO:0007669"/>
    <property type="project" value="UniProtKB-SubCell"/>
</dbReference>
<dbReference type="GO" id="GO:0050136">
    <property type="term" value="F:NADH:ubiquinone reductase (non-electrogenic) activity"/>
    <property type="evidence" value="ECO:0007669"/>
    <property type="project" value="UniProtKB-UniRule"/>
</dbReference>
<dbReference type="GO" id="GO:0048038">
    <property type="term" value="F:quinone binding"/>
    <property type="evidence" value="ECO:0007669"/>
    <property type="project" value="UniProtKB-KW"/>
</dbReference>
<dbReference type="GO" id="GO:0042773">
    <property type="term" value="P:ATP synthesis coupled electron transport"/>
    <property type="evidence" value="ECO:0007669"/>
    <property type="project" value="InterPro"/>
</dbReference>
<dbReference type="FunFam" id="1.10.287.3510:FF:000001">
    <property type="entry name" value="NADH-quinone oxidoreductase subunit K"/>
    <property type="match status" value="1"/>
</dbReference>
<dbReference type="Gene3D" id="1.10.287.3510">
    <property type="match status" value="1"/>
</dbReference>
<dbReference type="HAMAP" id="MF_01456">
    <property type="entry name" value="NDH1_NuoK"/>
    <property type="match status" value="1"/>
</dbReference>
<dbReference type="InterPro" id="IPR001133">
    <property type="entry name" value="NADH_UbQ_OxRdtase_chain4L/K"/>
</dbReference>
<dbReference type="InterPro" id="IPR039428">
    <property type="entry name" value="NUOK/Mnh_C1-like"/>
</dbReference>
<dbReference type="NCBIfam" id="NF004320">
    <property type="entry name" value="PRK05715.1-2"/>
    <property type="match status" value="1"/>
</dbReference>
<dbReference type="NCBIfam" id="NF004321">
    <property type="entry name" value="PRK05715.1-3"/>
    <property type="match status" value="1"/>
</dbReference>
<dbReference type="NCBIfam" id="NF004323">
    <property type="entry name" value="PRK05715.1-5"/>
    <property type="match status" value="1"/>
</dbReference>
<dbReference type="PANTHER" id="PTHR11434:SF21">
    <property type="entry name" value="NADH DEHYDROGENASE SUBUNIT 4L-RELATED"/>
    <property type="match status" value="1"/>
</dbReference>
<dbReference type="PANTHER" id="PTHR11434">
    <property type="entry name" value="NADH-UBIQUINONE OXIDOREDUCTASE SUBUNIT ND4L"/>
    <property type="match status" value="1"/>
</dbReference>
<dbReference type="Pfam" id="PF00420">
    <property type="entry name" value="Oxidored_q2"/>
    <property type="match status" value="1"/>
</dbReference>
<sequence>MLSLSHYLILGAVLFAISVVGIFLNRKNLIVLLMAIELMLLAVNLNFIAFSHYLGDIAGQVFVFFILTVAAAESAIGLAILVVMFRNLRTIHVDDLDSLKG</sequence>
<keyword id="KW-0997">Cell inner membrane</keyword>
<keyword id="KW-1003">Cell membrane</keyword>
<keyword id="KW-0472">Membrane</keyword>
<keyword id="KW-0520">NAD</keyword>
<keyword id="KW-0874">Quinone</keyword>
<keyword id="KW-1185">Reference proteome</keyword>
<keyword id="KW-1278">Translocase</keyword>
<keyword id="KW-0812">Transmembrane</keyword>
<keyword id="KW-1133">Transmembrane helix</keyword>
<keyword id="KW-0813">Transport</keyword>
<keyword id="KW-0830">Ubiquinone</keyword>